<sequence>MSLLKMEYNLYAELKKMTCGQTISLFNEDGDFVEVEPGSSFKFLIPKGFYSSPCVKTSLVFETLTTTDNKITSINPTNAPKLYPLQRKVVSEVVSNMRKMIELKRPLYITLHLACGFGKTITTCYLMTTHGRKTIICVPNKMLIHQWKTQVEAVGLEHKISIDGVSSLLKELKTQSPDVLIVVSRHLTNDAFCKYINKHYDLFILDESHTYNLMNNTAVTRFLAYYPPMMCYFLTATPRPANRIYCNSIINIAKLSDLKKTIYIVDSFFEPYSTDNIRNMVKRLDGPSNKYHIYTEKLLSVDEPRNQLILDTLVEEFKSGTINRILVITKLREHMVFFYKRLLDLFGAEVVFIGDAQNRRTPDMVKSIKELNRFIFVSTLFYSGTGLDIPSLDSLFICSAVINNMQIEQLLGRVCRETELLDRTVYVFPNTSIKEIKYMIGNFVQRIISLSVDKLGFKQESYQKHQESEPASVPTSSREERVLNRIFNSQNR</sequence>
<evidence type="ECO:0000250" key="1">
    <source>
        <dbReference type="UniProtKB" id="P16712"/>
    </source>
</evidence>
<evidence type="ECO:0000255" key="2">
    <source>
        <dbReference type="PROSITE-ProRule" id="PRU00541"/>
    </source>
</evidence>
<evidence type="ECO:0000305" key="3"/>
<comment type="function">
    <text evidence="1">DNA helicase which seems to act as a postreplicative transcription termination factor. Involved in ATP-dependent release of nascent RNA. Forms a stable complex with single-stranded DNA, and to a lesser extent RNA.</text>
</comment>
<comment type="subunit">
    <text evidence="1">Interacts with OPG087. Might be part of a transcription complex composed at least of OPG087, OPG110, and OPG145.</text>
</comment>
<comment type="subcellular location">
    <subcellularLocation>
        <location evidence="1">Virion</location>
    </subcellularLocation>
    <text evidence="1">Localizes to the virion core.</text>
</comment>
<comment type="similarity">
    <text evidence="3">Belongs to the helicase family. Poxviruses subfamily.</text>
</comment>
<keyword id="KW-0067">ATP-binding</keyword>
<keyword id="KW-0238">DNA-binding</keyword>
<keyword id="KW-0347">Helicase</keyword>
<keyword id="KW-0378">Hydrolase</keyword>
<keyword id="KW-0426">Late protein</keyword>
<keyword id="KW-0547">Nucleotide-binding</keyword>
<keyword id="KW-0597">Phosphoprotein</keyword>
<keyword id="KW-1185">Reference proteome</keyword>
<keyword id="KW-0804">Transcription</keyword>
<keyword id="KW-0805">Transcription regulation</keyword>
<keyword id="KW-0806">Transcription termination</keyword>
<keyword id="KW-0946">Virion</keyword>
<organismHost>
    <name type="scientific">Cynomys gunnisoni</name>
    <name type="common">Gunnison's prairie dog</name>
    <name type="synonym">Spermophilus gunnisoni</name>
    <dbReference type="NCBI Taxonomy" id="45479"/>
</organismHost>
<organismHost>
    <name type="scientific">Cynomys leucurus</name>
    <name type="common">White-tailed prairie dog</name>
    <dbReference type="NCBI Taxonomy" id="99825"/>
</organismHost>
<organismHost>
    <name type="scientific">Cynomys ludovicianus</name>
    <name type="common">Black-tailed prairie dog</name>
    <dbReference type="NCBI Taxonomy" id="45480"/>
</organismHost>
<organismHost>
    <name type="scientific">Cynomys mexicanus</name>
    <name type="common">Mexican prairie dog</name>
    <dbReference type="NCBI Taxonomy" id="99826"/>
</organismHost>
<organismHost>
    <name type="scientific">Cynomys parvidens</name>
    <name type="common">Utah prairie dog</name>
    <dbReference type="NCBI Taxonomy" id="99827"/>
</organismHost>
<organismHost>
    <name type="scientific">Gliridae</name>
    <name type="common">dormice</name>
    <dbReference type="NCBI Taxonomy" id="30650"/>
</organismHost>
<organismHost>
    <name type="scientific">Heliosciurus ruwenzorii</name>
    <name type="common">Ruwenzori sun squirrel</name>
    <dbReference type="NCBI Taxonomy" id="226685"/>
</organismHost>
<organismHost>
    <name type="scientific">Homo sapiens</name>
    <name type="common">Human</name>
    <dbReference type="NCBI Taxonomy" id="9606"/>
</organismHost>
<organismHost>
    <name type="scientific">Mus musculus</name>
    <name type="common">Mouse</name>
    <dbReference type="NCBI Taxonomy" id="10090"/>
</organismHost>
<gene>
    <name type="primary">OPG145</name>
    <name type="ORF">MPXVgp129</name>
</gene>
<feature type="chain" id="PRO_0000457548" description="Transcript termination protein OPG145">
    <location>
        <begin position="1"/>
        <end position="492"/>
    </location>
</feature>
<feature type="domain" description="Helicase ATP-binding" evidence="2">
    <location>
        <begin position="100"/>
        <end position="256"/>
    </location>
</feature>
<feature type="short sequence motif" description="DEAH box" evidence="2">
    <location>
        <begin position="206"/>
        <end position="209"/>
    </location>
</feature>
<feature type="binding site" evidence="2">
    <location>
        <begin position="113"/>
        <end position="120"/>
    </location>
    <ligand>
        <name>ATP</name>
        <dbReference type="ChEBI" id="CHEBI:30616"/>
    </ligand>
</feature>
<organism>
    <name type="scientific">Monkeypox virus</name>
    <dbReference type="NCBI Taxonomy" id="10244"/>
    <lineage>
        <taxon>Viruses</taxon>
        <taxon>Varidnaviria</taxon>
        <taxon>Bamfordvirae</taxon>
        <taxon>Nucleocytoviricota</taxon>
        <taxon>Pokkesviricetes</taxon>
        <taxon>Chitovirales</taxon>
        <taxon>Poxviridae</taxon>
        <taxon>Chordopoxvirinae</taxon>
        <taxon>Orthopoxvirus</taxon>
    </lineage>
</organism>
<accession>A0A7H0DNB7</accession>
<protein>
    <recommendedName>
        <fullName>Transcript termination protein OPG145</fullName>
        <ecNumber>3.6.4.-</ecNumber>
    </recommendedName>
    <alternativeName>
        <fullName>56 kDa abortive late protein</fullName>
    </alternativeName>
</protein>
<name>PG145_MONPV</name>
<proteinExistence type="inferred from homology"/>
<dbReference type="EC" id="3.6.4.-"/>
<dbReference type="EMBL" id="MT903340">
    <property type="protein sequence ID" value="QNP13000.1"/>
    <property type="molecule type" value="Genomic_DNA"/>
</dbReference>
<dbReference type="RefSeq" id="YP_010377127.1">
    <property type="nucleotide sequence ID" value="NC_063383.1"/>
</dbReference>
<dbReference type="GeneID" id="72551540"/>
<dbReference type="Proteomes" id="UP000516359">
    <property type="component" value="Genome"/>
</dbReference>
<dbReference type="GO" id="GO:0044423">
    <property type="term" value="C:virion component"/>
    <property type="evidence" value="ECO:0007669"/>
    <property type="project" value="UniProtKB-KW"/>
</dbReference>
<dbReference type="GO" id="GO:0005524">
    <property type="term" value="F:ATP binding"/>
    <property type="evidence" value="ECO:0007669"/>
    <property type="project" value="UniProtKB-KW"/>
</dbReference>
<dbReference type="GO" id="GO:0003677">
    <property type="term" value="F:DNA binding"/>
    <property type="evidence" value="ECO:0007669"/>
    <property type="project" value="UniProtKB-KW"/>
</dbReference>
<dbReference type="GO" id="GO:0004386">
    <property type="term" value="F:helicase activity"/>
    <property type="evidence" value="ECO:0007669"/>
    <property type="project" value="UniProtKB-KW"/>
</dbReference>
<dbReference type="GO" id="GO:0016787">
    <property type="term" value="F:hydrolase activity"/>
    <property type="evidence" value="ECO:0007669"/>
    <property type="project" value="UniProtKB-KW"/>
</dbReference>
<dbReference type="GO" id="GO:0006353">
    <property type="term" value="P:DNA-templated transcription termination"/>
    <property type="evidence" value="ECO:0007669"/>
    <property type="project" value="UniProtKB-KW"/>
</dbReference>
<dbReference type="CDD" id="cd18785">
    <property type="entry name" value="SF2_C"/>
    <property type="match status" value="1"/>
</dbReference>
<dbReference type="Gene3D" id="3.40.50.300">
    <property type="entry name" value="P-loop containing nucleotide triphosphate hydrolases"/>
    <property type="match status" value="2"/>
</dbReference>
<dbReference type="InterPro" id="IPR006935">
    <property type="entry name" value="Helicase/UvrB_N"/>
</dbReference>
<dbReference type="InterPro" id="IPR014001">
    <property type="entry name" value="Helicase_ATP-bd"/>
</dbReference>
<dbReference type="InterPro" id="IPR050742">
    <property type="entry name" value="Helicase_Restrict-Modif_Enz"/>
</dbReference>
<dbReference type="InterPro" id="IPR027417">
    <property type="entry name" value="P-loop_NTPase"/>
</dbReference>
<dbReference type="PANTHER" id="PTHR47396:SF1">
    <property type="entry name" value="ATP-DEPENDENT HELICASE IRC3-RELATED"/>
    <property type="match status" value="1"/>
</dbReference>
<dbReference type="PANTHER" id="PTHR47396">
    <property type="entry name" value="TYPE I RESTRICTION ENZYME ECOKI R PROTEIN"/>
    <property type="match status" value="1"/>
</dbReference>
<dbReference type="Pfam" id="PF04851">
    <property type="entry name" value="ResIII"/>
    <property type="match status" value="1"/>
</dbReference>
<dbReference type="SMART" id="SM00487">
    <property type="entry name" value="DEXDc"/>
    <property type="match status" value="1"/>
</dbReference>
<dbReference type="SUPFAM" id="SSF52540">
    <property type="entry name" value="P-loop containing nucleoside triphosphate hydrolases"/>
    <property type="match status" value="1"/>
</dbReference>
<dbReference type="PROSITE" id="PS51192">
    <property type="entry name" value="HELICASE_ATP_BIND_1"/>
    <property type="match status" value="1"/>
</dbReference>
<reference key="1">
    <citation type="journal article" date="2022" name="J. Infect. Dis.">
        <title>Exportation of Monkeypox virus from the African continent.</title>
        <authorList>
            <person name="Mauldin M.R."/>
            <person name="McCollum A.M."/>
            <person name="Nakazawa Y.J."/>
            <person name="Mandra A."/>
            <person name="Whitehouse E.R."/>
            <person name="Davidson W."/>
            <person name="Zhao H."/>
            <person name="Gao J."/>
            <person name="Li Y."/>
            <person name="Doty J."/>
            <person name="Yinka-Ogunleye A."/>
            <person name="Akinpelu A."/>
            <person name="Aruna O."/>
            <person name="Naidoo D."/>
            <person name="Lewandowski K."/>
            <person name="Afrough B."/>
            <person name="Graham V."/>
            <person name="Aarons E."/>
            <person name="Hewson R."/>
            <person name="Vipond R."/>
            <person name="Dunning J."/>
            <person name="Chand M."/>
            <person name="Brown C."/>
            <person name="Cohen-Gihon I."/>
            <person name="Erez N."/>
            <person name="Shifman O."/>
            <person name="Israeli O."/>
            <person name="Sharon M."/>
            <person name="Schwartz E."/>
            <person name="Beth-Din A."/>
            <person name="Zvi A."/>
            <person name="Mak T.M."/>
            <person name="Ng Y.K."/>
            <person name="Cui L."/>
            <person name="Lin R.T.P."/>
            <person name="Olson V.A."/>
            <person name="Brooks T."/>
            <person name="Paran N."/>
            <person name="Ihekweazu C."/>
            <person name="Reynolds M.G."/>
        </authorList>
    </citation>
    <scope>NUCLEOTIDE SEQUENCE [LARGE SCALE GENOMIC DNA]</scope>
    <source>
        <strain>MPXV-M5312_HM12_Rivers</strain>
    </source>
</reference>